<sequence length="104" mass="11316">MAAKIRRDDEVIVLTGKDKGKRGKVKNVLSSGKVIVEGINLVKKHQKPVPALNQPGGIVEKEAAIQVSNVAIFNAATGKADRVGFRFEDGKKVRFFKSNSETIK</sequence>
<dbReference type="EMBL" id="CU928164">
    <property type="protein sequence ID" value="CAR19917.1"/>
    <property type="molecule type" value="Genomic_DNA"/>
</dbReference>
<dbReference type="RefSeq" id="WP_000729185.1">
    <property type="nucleotide sequence ID" value="NC_011750.1"/>
</dbReference>
<dbReference type="RefSeq" id="YP_002409700.1">
    <property type="nucleotide sequence ID" value="NC_011750.1"/>
</dbReference>
<dbReference type="SMR" id="B7NLM8"/>
<dbReference type="STRING" id="585057.ECIAI39_3803"/>
<dbReference type="GeneID" id="93778678"/>
<dbReference type="KEGG" id="ect:ECIAI39_3803"/>
<dbReference type="PATRIC" id="fig|585057.6.peg.3940"/>
<dbReference type="HOGENOM" id="CLU_093315_2_2_6"/>
<dbReference type="PRO" id="PR:B7NLM8"/>
<dbReference type="Proteomes" id="UP000000749">
    <property type="component" value="Chromosome"/>
</dbReference>
<dbReference type="GO" id="GO:0005829">
    <property type="term" value="C:cytosol"/>
    <property type="evidence" value="ECO:0007669"/>
    <property type="project" value="UniProtKB-ARBA"/>
</dbReference>
<dbReference type="GO" id="GO:1990904">
    <property type="term" value="C:ribonucleoprotein complex"/>
    <property type="evidence" value="ECO:0007669"/>
    <property type="project" value="UniProtKB-KW"/>
</dbReference>
<dbReference type="GO" id="GO:0005840">
    <property type="term" value="C:ribosome"/>
    <property type="evidence" value="ECO:0007669"/>
    <property type="project" value="UniProtKB-KW"/>
</dbReference>
<dbReference type="GO" id="GO:0019843">
    <property type="term" value="F:rRNA binding"/>
    <property type="evidence" value="ECO:0007669"/>
    <property type="project" value="UniProtKB-UniRule"/>
</dbReference>
<dbReference type="GO" id="GO:0003735">
    <property type="term" value="F:structural constituent of ribosome"/>
    <property type="evidence" value="ECO:0007669"/>
    <property type="project" value="InterPro"/>
</dbReference>
<dbReference type="GO" id="GO:0006412">
    <property type="term" value="P:translation"/>
    <property type="evidence" value="ECO:0007669"/>
    <property type="project" value="UniProtKB-UniRule"/>
</dbReference>
<dbReference type="CDD" id="cd06089">
    <property type="entry name" value="KOW_RPL26"/>
    <property type="match status" value="1"/>
</dbReference>
<dbReference type="FunFam" id="2.30.30.30:FF:000004">
    <property type="entry name" value="50S ribosomal protein L24"/>
    <property type="match status" value="1"/>
</dbReference>
<dbReference type="Gene3D" id="2.30.30.30">
    <property type="match status" value="1"/>
</dbReference>
<dbReference type="HAMAP" id="MF_01326_B">
    <property type="entry name" value="Ribosomal_uL24_B"/>
    <property type="match status" value="1"/>
</dbReference>
<dbReference type="InterPro" id="IPR005824">
    <property type="entry name" value="KOW"/>
</dbReference>
<dbReference type="InterPro" id="IPR014722">
    <property type="entry name" value="Rib_uL2_dom2"/>
</dbReference>
<dbReference type="InterPro" id="IPR003256">
    <property type="entry name" value="Ribosomal_uL24"/>
</dbReference>
<dbReference type="InterPro" id="IPR005825">
    <property type="entry name" value="Ribosomal_uL24_CS"/>
</dbReference>
<dbReference type="InterPro" id="IPR041988">
    <property type="entry name" value="Ribosomal_uL24_KOW"/>
</dbReference>
<dbReference type="InterPro" id="IPR008991">
    <property type="entry name" value="Translation_prot_SH3-like_sf"/>
</dbReference>
<dbReference type="NCBIfam" id="TIGR01079">
    <property type="entry name" value="rplX_bact"/>
    <property type="match status" value="1"/>
</dbReference>
<dbReference type="PANTHER" id="PTHR12903">
    <property type="entry name" value="MITOCHONDRIAL RIBOSOMAL PROTEIN L24"/>
    <property type="match status" value="1"/>
</dbReference>
<dbReference type="Pfam" id="PF00467">
    <property type="entry name" value="KOW"/>
    <property type="match status" value="1"/>
</dbReference>
<dbReference type="Pfam" id="PF17136">
    <property type="entry name" value="ribosomal_L24"/>
    <property type="match status" value="1"/>
</dbReference>
<dbReference type="SMART" id="SM00739">
    <property type="entry name" value="KOW"/>
    <property type="match status" value="1"/>
</dbReference>
<dbReference type="SUPFAM" id="SSF50104">
    <property type="entry name" value="Translation proteins SH3-like domain"/>
    <property type="match status" value="1"/>
</dbReference>
<dbReference type="PROSITE" id="PS01108">
    <property type="entry name" value="RIBOSOMAL_L24"/>
    <property type="match status" value="1"/>
</dbReference>
<protein>
    <recommendedName>
        <fullName evidence="1">Large ribosomal subunit protein uL24</fullName>
    </recommendedName>
    <alternativeName>
        <fullName evidence="2">50S ribosomal protein L24</fullName>
    </alternativeName>
</protein>
<reference key="1">
    <citation type="journal article" date="2009" name="PLoS Genet.">
        <title>Organised genome dynamics in the Escherichia coli species results in highly diverse adaptive paths.</title>
        <authorList>
            <person name="Touchon M."/>
            <person name="Hoede C."/>
            <person name="Tenaillon O."/>
            <person name="Barbe V."/>
            <person name="Baeriswyl S."/>
            <person name="Bidet P."/>
            <person name="Bingen E."/>
            <person name="Bonacorsi S."/>
            <person name="Bouchier C."/>
            <person name="Bouvet O."/>
            <person name="Calteau A."/>
            <person name="Chiapello H."/>
            <person name="Clermont O."/>
            <person name="Cruveiller S."/>
            <person name="Danchin A."/>
            <person name="Diard M."/>
            <person name="Dossat C."/>
            <person name="Karoui M.E."/>
            <person name="Frapy E."/>
            <person name="Garry L."/>
            <person name="Ghigo J.M."/>
            <person name="Gilles A.M."/>
            <person name="Johnson J."/>
            <person name="Le Bouguenec C."/>
            <person name="Lescat M."/>
            <person name="Mangenot S."/>
            <person name="Martinez-Jehanne V."/>
            <person name="Matic I."/>
            <person name="Nassif X."/>
            <person name="Oztas S."/>
            <person name="Petit M.A."/>
            <person name="Pichon C."/>
            <person name="Rouy Z."/>
            <person name="Ruf C.S."/>
            <person name="Schneider D."/>
            <person name="Tourret J."/>
            <person name="Vacherie B."/>
            <person name="Vallenet D."/>
            <person name="Medigue C."/>
            <person name="Rocha E.P.C."/>
            <person name="Denamur E."/>
        </authorList>
    </citation>
    <scope>NUCLEOTIDE SEQUENCE [LARGE SCALE GENOMIC DNA]</scope>
    <source>
        <strain>IAI39 / ExPEC</strain>
    </source>
</reference>
<accession>B7NLM8</accession>
<keyword id="KW-0687">Ribonucleoprotein</keyword>
<keyword id="KW-0689">Ribosomal protein</keyword>
<keyword id="KW-0694">RNA-binding</keyword>
<keyword id="KW-0699">rRNA-binding</keyword>
<evidence type="ECO:0000255" key="1">
    <source>
        <dbReference type="HAMAP-Rule" id="MF_01326"/>
    </source>
</evidence>
<evidence type="ECO:0000305" key="2"/>
<organism>
    <name type="scientific">Escherichia coli O7:K1 (strain IAI39 / ExPEC)</name>
    <dbReference type="NCBI Taxonomy" id="585057"/>
    <lineage>
        <taxon>Bacteria</taxon>
        <taxon>Pseudomonadati</taxon>
        <taxon>Pseudomonadota</taxon>
        <taxon>Gammaproteobacteria</taxon>
        <taxon>Enterobacterales</taxon>
        <taxon>Enterobacteriaceae</taxon>
        <taxon>Escherichia</taxon>
    </lineage>
</organism>
<name>RL24_ECO7I</name>
<feature type="chain" id="PRO_1000141991" description="Large ribosomal subunit protein uL24">
    <location>
        <begin position="1"/>
        <end position="104"/>
    </location>
</feature>
<proteinExistence type="inferred from homology"/>
<gene>
    <name evidence="1" type="primary">rplX</name>
    <name type="ordered locus">ECIAI39_3803</name>
</gene>
<comment type="function">
    <text evidence="1">One of two assembly initiator proteins, it binds directly to the 5'-end of the 23S rRNA, where it nucleates assembly of the 50S subunit.</text>
</comment>
<comment type="function">
    <text evidence="1">One of the proteins that surrounds the polypeptide exit tunnel on the outside of the subunit.</text>
</comment>
<comment type="subunit">
    <text evidence="1">Part of the 50S ribosomal subunit.</text>
</comment>
<comment type="similarity">
    <text evidence="1">Belongs to the universal ribosomal protein uL24 family.</text>
</comment>